<feature type="chain" id="PRO_1000023134" description="Peptide deformylase">
    <location>
        <begin position="1"/>
        <end position="175"/>
    </location>
</feature>
<feature type="active site" evidence="1">
    <location>
        <position position="142"/>
    </location>
</feature>
<feature type="binding site" evidence="1">
    <location>
        <position position="99"/>
    </location>
    <ligand>
        <name>Fe cation</name>
        <dbReference type="ChEBI" id="CHEBI:24875"/>
    </ligand>
</feature>
<feature type="binding site" evidence="1">
    <location>
        <position position="141"/>
    </location>
    <ligand>
        <name>Fe cation</name>
        <dbReference type="ChEBI" id="CHEBI:24875"/>
    </ligand>
</feature>
<feature type="binding site" evidence="1">
    <location>
        <position position="145"/>
    </location>
    <ligand>
        <name>Fe cation</name>
        <dbReference type="ChEBI" id="CHEBI:24875"/>
    </ligand>
</feature>
<name>DEF_RICCK</name>
<organism>
    <name type="scientific">Rickettsia canadensis (strain McKiel)</name>
    <dbReference type="NCBI Taxonomy" id="293613"/>
    <lineage>
        <taxon>Bacteria</taxon>
        <taxon>Pseudomonadati</taxon>
        <taxon>Pseudomonadota</taxon>
        <taxon>Alphaproteobacteria</taxon>
        <taxon>Rickettsiales</taxon>
        <taxon>Rickettsiaceae</taxon>
        <taxon>Rickettsieae</taxon>
        <taxon>Rickettsia</taxon>
        <taxon>belli group</taxon>
    </lineage>
</organism>
<accession>A8EXV2</accession>
<reference key="1">
    <citation type="submission" date="2007-09" db="EMBL/GenBank/DDBJ databases">
        <title>Complete genome sequence of Rickettsia canadensis.</title>
        <authorList>
            <person name="Madan A."/>
            <person name="Fahey J."/>
            <person name="Helton E."/>
            <person name="Ketteman M."/>
            <person name="Madan A."/>
            <person name="Rodrigues S."/>
            <person name="Sanchez A."/>
            <person name="Whiting M."/>
            <person name="Dasch G."/>
            <person name="Eremeeva M."/>
        </authorList>
    </citation>
    <scope>NUCLEOTIDE SEQUENCE [LARGE SCALE GENOMIC DNA]</scope>
    <source>
        <strain>McKiel</strain>
    </source>
</reference>
<keyword id="KW-0378">Hydrolase</keyword>
<keyword id="KW-0408">Iron</keyword>
<keyword id="KW-0479">Metal-binding</keyword>
<keyword id="KW-0648">Protein biosynthesis</keyword>
<proteinExistence type="inferred from homology"/>
<protein>
    <recommendedName>
        <fullName evidence="1">Peptide deformylase</fullName>
        <shortName evidence="1">PDF</shortName>
        <ecNumber evidence="1">3.5.1.88</ecNumber>
    </recommendedName>
    <alternativeName>
        <fullName evidence="1">Polypeptide deformylase</fullName>
    </alternativeName>
</protein>
<sequence length="175" mass="20399">MSILPIVTAPDERLKQKSHRVLEVTDQTRKFMDDMLKTMYHEDAAGLAAVQVGILKRILVIDIKDHDPVERPKDFYPLFIVNPDIIDKSEELVTANEGCISVPRQRVEVARPESIKIKYLDYHNKQQELEANDWLARVIQHEYDHLEGKLMIDYLSSLKRDVVLRKLKKLKNNIV</sequence>
<gene>
    <name evidence="1" type="primary">def</name>
    <name type="ordered locus">A1E_01200</name>
</gene>
<comment type="function">
    <text evidence="1">Removes the formyl group from the N-terminal Met of newly synthesized proteins. Requires at least a dipeptide for an efficient rate of reaction. N-terminal L-methionine is a prerequisite for activity but the enzyme has broad specificity at other positions.</text>
</comment>
<comment type="catalytic activity">
    <reaction evidence="1">
        <text>N-terminal N-formyl-L-methionyl-[peptide] + H2O = N-terminal L-methionyl-[peptide] + formate</text>
        <dbReference type="Rhea" id="RHEA:24420"/>
        <dbReference type="Rhea" id="RHEA-COMP:10639"/>
        <dbReference type="Rhea" id="RHEA-COMP:10640"/>
        <dbReference type="ChEBI" id="CHEBI:15377"/>
        <dbReference type="ChEBI" id="CHEBI:15740"/>
        <dbReference type="ChEBI" id="CHEBI:49298"/>
        <dbReference type="ChEBI" id="CHEBI:64731"/>
        <dbReference type="EC" id="3.5.1.88"/>
    </reaction>
</comment>
<comment type="cofactor">
    <cofactor evidence="1">
        <name>Fe(2+)</name>
        <dbReference type="ChEBI" id="CHEBI:29033"/>
    </cofactor>
    <text evidence="1">Binds 1 Fe(2+) ion.</text>
</comment>
<comment type="similarity">
    <text evidence="1">Belongs to the polypeptide deformylase family.</text>
</comment>
<evidence type="ECO:0000255" key="1">
    <source>
        <dbReference type="HAMAP-Rule" id="MF_00163"/>
    </source>
</evidence>
<dbReference type="EC" id="3.5.1.88" evidence="1"/>
<dbReference type="EMBL" id="CP000409">
    <property type="protein sequence ID" value="ABV73185.1"/>
    <property type="molecule type" value="Genomic_DNA"/>
</dbReference>
<dbReference type="RefSeq" id="WP_012148385.1">
    <property type="nucleotide sequence ID" value="NC_009879.1"/>
</dbReference>
<dbReference type="SMR" id="A8EXV2"/>
<dbReference type="STRING" id="293613.A1E_01200"/>
<dbReference type="KEGG" id="rcm:A1E_01200"/>
<dbReference type="eggNOG" id="COG0242">
    <property type="taxonomic scope" value="Bacteria"/>
</dbReference>
<dbReference type="HOGENOM" id="CLU_061901_2_2_5"/>
<dbReference type="Proteomes" id="UP000007056">
    <property type="component" value="Chromosome"/>
</dbReference>
<dbReference type="GO" id="GO:0046872">
    <property type="term" value="F:metal ion binding"/>
    <property type="evidence" value="ECO:0007669"/>
    <property type="project" value="UniProtKB-KW"/>
</dbReference>
<dbReference type="GO" id="GO:0042586">
    <property type="term" value="F:peptide deformylase activity"/>
    <property type="evidence" value="ECO:0007669"/>
    <property type="project" value="UniProtKB-UniRule"/>
</dbReference>
<dbReference type="GO" id="GO:0006412">
    <property type="term" value="P:translation"/>
    <property type="evidence" value="ECO:0007669"/>
    <property type="project" value="UniProtKB-UniRule"/>
</dbReference>
<dbReference type="CDD" id="cd00487">
    <property type="entry name" value="Pep_deformylase"/>
    <property type="match status" value="1"/>
</dbReference>
<dbReference type="FunFam" id="3.90.45.10:FF:000005">
    <property type="entry name" value="Peptide deformylase"/>
    <property type="match status" value="1"/>
</dbReference>
<dbReference type="Gene3D" id="3.90.45.10">
    <property type="entry name" value="Peptide deformylase"/>
    <property type="match status" value="1"/>
</dbReference>
<dbReference type="HAMAP" id="MF_00163">
    <property type="entry name" value="Pep_deformylase"/>
    <property type="match status" value="1"/>
</dbReference>
<dbReference type="InterPro" id="IPR023635">
    <property type="entry name" value="Peptide_deformylase"/>
</dbReference>
<dbReference type="InterPro" id="IPR036821">
    <property type="entry name" value="Peptide_deformylase_sf"/>
</dbReference>
<dbReference type="NCBIfam" id="TIGR00079">
    <property type="entry name" value="pept_deformyl"/>
    <property type="match status" value="1"/>
</dbReference>
<dbReference type="NCBIfam" id="NF001159">
    <property type="entry name" value="PRK00150.1-3"/>
    <property type="match status" value="1"/>
</dbReference>
<dbReference type="PANTHER" id="PTHR10458">
    <property type="entry name" value="PEPTIDE DEFORMYLASE"/>
    <property type="match status" value="1"/>
</dbReference>
<dbReference type="PANTHER" id="PTHR10458:SF22">
    <property type="entry name" value="PEPTIDE DEFORMYLASE"/>
    <property type="match status" value="1"/>
</dbReference>
<dbReference type="Pfam" id="PF01327">
    <property type="entry name" value="Pep_deformylase"/>
    <property type="match status" value="1"/>
</dbReference>
<dbReference type="PIRSF" id="PIRSF004749">
    <property type="entry name" value="Pep_def"/>
    <property type="match status" value="1"/>
</dbReference>
<dbReference type="PRINTS" id="PR01576">
    <property type="entry name" value="PDEFORMYLASE"/>
</dbReference>
<dbReference type="SUPFAM" id="SSF56420">
    <property type="entry name" value="Peptide deformylase"/>
    <property type="match status" value="1"/>
</dbReference>